<accession>B0U4Z7</accession>
<feature type="chain" id="PRO_1000090490" description="UDP-N-acetylglucosamine--N-acetylmuramyl-(pentapeptide) pyrophosphoryl-undecaprenol N-acetylglucosamine transferase">
    <location>
        <begin position="1"/>
        <end position="366"/>
    </location>
</feature>
<feature type="binding site" evidence="1">
    <location>
        <begin position="22"/>
        <end position="24"/>
    </location>
    <ligand>
        <name>UDP-N-acetyl-alpha-D-glucosamine</name>
        <dbReference type="ChEBI" id="CHEBI:57705"/>
    </ligand>
</feature>
<feature type="binding site" evidence="1">
    <location>
        <position position="134"/>
    </location>
    <ligand>
        <name>UDP-N-acetyl-alpha-D-glucosamine</name>
        <dbReference type="ChEBI" id="CHEBI:57705"/>
    </ligand>
</feature>
<feature type="binding site" evidence="1">
    <location>
        <position position="170"/>
    </location>
    <ligand>
        <name>UDP-N-acetyl-alpha-D-glucosamine</name>
        <dbReference type="ChEBI" id="CHEBI:57705"/>
    </ligand>
</feature>
<feature type="binding site" evidence="1">
    <location>
        <position position="198"/>
    </location>
    <ligand>
        <name>UDP-N-acetyl-alpha-D-glucosamine</name>
        <dbReference type="ChEBI" id="CHEBI:57705"/>
    </ligand>
</feature>
<feature type="binding site" evidence="1">
    <location>
        <position position="253"/>
    </location>
    <ligand>
        <name>UDP-N-acetyl-alpha-D-glucosamine</name>
        <dbReference type="ChEBI" id="CHEBI:57705"/>
    </ligand>
</feature>
<feature type="binding site" evidence="1">
    <location>
        <position position="298"/>
    </location>
    <ligand>
        <name>UDP-N-acetyl-alpha-D-glucosamine</name>
        <dbReference type="ChEBI" id="CHEBI:57705"/>
    </ligand>
</feature>
<organism>
    <name type="scientific">Xylella fastidiosa (strain M12)</name>
    <dbReference type="NCBI Taxonomy" id="405440"/>
    <lineage>
        <taxon>Bacteria</taxon>
        <taxon>Pseudomonadati</taxon>
        <taxon>Pseudomonadota</taxon>
        <taxon>Gammaproteobacteria</taxon>
        <taxon>Lysobacterales</taxon>
        <taxon>Lysobacteraceae</taxon>
        <taxon>Xylella</taxon>
    </lineage>
</organism>
<keyword id="KW-0131">Cell cycle</keyword>
<keyword id="KW-0132">Cell division</keyword>
<keyword id="KW-0997">Cell inner membrane</keyword>
<keyword id="KW-1003">Cell membrane</keyword>
<keyword id="KW-0133">Cell shape</keyword>
<keyword id="KW-0961">Cell wall biogenesis/degradation</keyword>
<keyword id="KW-0328">Glycosyltransferase</keyword>
<keyword id="KW-0472">Membrane</keyword>
<keyword id="KW-0573">Peptidoglycan synthesis</keyword>
<keyword id="KW-0808">Transferase</keyword>
<evidence type="ECO:0000255" key="1">
    <source>
        <dbReference type="HAMAP-Rule" id="MF_00033"/>
    </source>
</evidence>
<gene>
    <name evidence="1" type="primary">murG</name>
    <name type="ordered locus">Xfasm12_2048</name>
</gene>
<dbReference type="EC" id="2.4.1.227" evidence="1"/>
<dbReference type="EMBL" id="CP000941">
    <property type="protein sequence ID" value="ACA12914.1"/>
    <property type="molecule type" value="Genomic_DNA"/>
</dbReference>
<dbReference type="RefSeq" id="WP_004084474.1">
    <property type="nucleotide sequence ID" value="NC_010513.1"/>
</dbReference>
<dbReference type="SMR" id="B0U4Z7"/>
<dbReference type="CAZy" id="GT28">
    <property type="family name" value="Glycosyltransferase Family 28"/>
</dbReference>
<dbReference type="KEGG" id="xfm:Xfasm12_2048"/>
<dbReference type="HOGENOM" id="CLU_037404_2_0_6"/>
<dbReference type="UniPathway" id="UPA00219"/>
<dbReference type="GO" id="GO:0005886">
    <property type="term" value="C:plasma membrane"/>
    <property type="evidence" value="ECO:0007669"/>
    <property type="project" value="UniProtKB-SubCell"/>
</dbReference>
<dbReference type="GO" id="GO:0051991">
    <property type="term" value="F:UDP-N-acetyl-D-glucosamine:N-acetylmuramoyl-L-alanyl-D-glutamyl-meso-2,6-diaminopimelyl-D-alanyl-D-alanine-diphosphoundecaprenol 4-beta-N-acetylglucosaminlytransferase activity"/>
    <property type="evidence" value="ECO:0007669"/>
    <property type="project" value="RHEA"/>
</dbReference>
<dbReference type="GO" id="GO:0050511">
    <property type="term" value="F:undecaprenyldiphospho-muramoylpentapeptide beta-N-acetylglucosaminyltransferase activity"/>
    <property type="evidence" value="ECO:0007669"/>
    <property type="project" value="UniProtKB-UniRule"/>
</dbReference>
<dbReference type="GO" id="GO:0005975">
    <property type="term" value="P:carbohydrate metabolic process"/>
    <property type="evidence" value="ECO:0007669"/>
    <property type="project" value="InterPro"/>
</dbReference>
<dbReference type="GO" id="GO:0051301">
    <property type="term" value="P:cell division"/>
    <property type="evidence" value="ECO:0007669"/>
    <property type="project" value="UniProtKB-KW"/>
</dbReference>
<dbReference type="GO" id="GO:0071555">
    <property type="term" value="P:cell wall organization"/>
    <property type="evidence" value="ECO:0007669"/>
    <property type="project" value="UniProtKB-KW"/>
</dbReference>
<dbReference type="GO" id="GO:0030259">
    <property type="term" value="P:lipid glycosylation"/>
    <property type="evidence" value="ECO:0007669"/>
    <property type="project" value="UniProtKB-UniRule"/>
</dbReference>
<dbReference type="GO" id="GO:0009252">
    <property type="term" value="P:peptidoglycan biosynthetic process"/>
    <property type="evidence" value="ECO:0007669"/>
    <property type="project" value="UniProtKB-UniRule"/>
</dbReference>
<dbReference type="GO" id="GO:0008360">
    <property type="term" value="P:regulation of cell shape"/>
    <property type="evidence" value="ECO:0007669"/>
    <property type="project" value="UniProtKB-KW"/>
</dbReference>
<dbReference type="CDD" id="cd03785">
    <property type="entry name" value="GT28_MurG"/>
    <property type="match status" value="1"/>
</dbReference>
<dbReference type="Gene3D" id="3.40.50.2000">
    <property type="entry name" value="Glycogen Phosphorylase B"/>
    <property type="match status" value="2"/>
</dbReference>
<dbReference type="HAMAP" id="MF_00033">
    <property type="entry name" value="MurG"/>
    <property type="match status" value="1"/>
</dbReference>
<dbReference type="InterPro" id="IPR006009">
    <property type="entry name" value="GlcNAc_MurG"/>
</dbReference>
<dbReference type="InterPro" id="IPR007235">
    <property type="entry name" value="Glyco_trans_28_C"/>
</dbReference>
<dbReference type="InterPro" id="IPR004276">
    <property type="entry name" value="GlycoTrans_28_N"/>
</dbReference>
<dbReference type="NCBIfam" id="TIGR01133">
    <property type="entry name" value="murG"/>
    <property type="match status" value="1"/>
</dbReference>
<dbReference type="PANTHER" id="PTHR21015:SF22">
    <property type="entry name" value="GLYCOSYLTRANSFERASE"/>
    <property type="match status" value="1"/>
</dbReference>
<dbReference type="PANTHER" id="PTHR21015">
    <property type="entry name" value="UDP-N-ACETYLGLUCOSAMINE--N-ACETYLMURAMYL-(PENTAPEPTIDE) PYROPHOSPHORYL-UNDECAPRENOL N-ACETYLGLUCOSAMINE TRANSFERASE 1"/>
    <property type="match status" value="1"/>
</dbReference>
<dbReference type="Pfam" id="PF04101">
    <property type="entry name" value="Glyco_tran_28_C"/>
    <property type="match status" value="1"/>
</dbReference>
<dbReference type="Pfam" id="PF03033">
    <property type="entry name" value="Glyco_transf_28"/>
    <property type="match status" value="1"/>
</dbReference>
<dbReference type="SUPFAM" id="SSF53756">
    <property type="entry name" value="UDP-Glycosyltransferase/glycogen phosphorylase"/>
    <property type="match status" value="1"/>
</dbReference>
<name>MURG_XYLFM</name>
<reference key="1">
    <citation type="journal article" date="2010" name="J. Bacteriol.">
        <title>Whole genome sequences of two Xylella fastidiosa strains (M12 and M23) causing almond leaf scorch disease in California.</title>
        <authorList>
            <person name="Chen J."/>
            <person name="Xie G."/>
            <person name="Han S."/>
            <person name="Chertkov O."/>
            <person name="Sims D."/>
            <person name="Civerolo E.L."/>
        </authorList>
    </citation>
    <scope>NUCLEOTIDE SEQUENCE [LARGE SCALE GENOMIC DNA]</scope>
    <source>
        <strain>M12</strain>
    </source>
</reference>
<sequence>MSIVVQSAVTHFRPVMILAGGTGGHIFPGLAVAGALRARGVPVVWLGATGKMETHLVPKHGIEIQTIAVAGVRGRGMLALLGAPVRVLRAIFAAMGVLRRYRPRVVVSFGGFAAGPGGIAARFMRLPLIVHEQNRAPGMTNRVLARVAKRVLSGFPGSFVAEEVVGNPVRKDIAGLPAPGVRFSGRSGPVRLLVLGGSQGARVMNDALPVVLRVLSDSDVAVEVRHQCGEALCAETERAYAYAGVAARIEPFISDMAAAYAWADLVVCRAGASTLAELCAAGVGSVLIPFPAAVDDHQTRNAEYLVAAGAALLLQQDRALYVYLESVLRDLLSDPMRRLAMAEAARGLAKSDAAECIAEIVLEESI</sequence>
<protein>
    <recommendedName>
        <fullName evidence="1">UDP-N-acetylglucosamine--N-acetylmuramyl-(pentapeptide) pyrophosphoryl-undecaprenol N-acetylglucosamine transferase</fullName>
        <ecNumber evidence="1">2.4.1.227</ecNumber>
    </recommendedName>
    <alternativeName>
        <fullName evidence="1">Undecaprenyl-PP-MurNAc-pentapeptide-UDPGlcNAc GlcNAc transferase</fullName>
    </alternativeName>
</protein>
<proteinExistence type="inferred from homology"/>
<comment type="function">
    <text evidence="1">Cell wall formation. Catalyzes the transfer of a GlcNAc subunit on undecaprenyl-pyrophosphoryl-MurNAc-pentapeptide (lipid intermediate I) to form undecaprenyl-pyrophosphoryl-MurNAc-(pentapeptide)GlcNAc (lipid intermediate II).</text>
</comment>
<comment type="catalytic activity">
    <reaction evidence="1">
        <text>di-trans,octa-cis-undecaprenyl diphospho-N-acetyl-alpha-D-muramoyl-L-alanyl-D-glutamyl-meso-2,6-diaminopimeloyl-D-alanyl-D-alanine + UDP-N-acetyl-alpha-D-glucosamine = di-trans,octa-cis-undecaprenyl diphospho-[N-acetyl-alpha-D-glucosaminyl-(1-&gt;4)]-N-acetyl-alpha-D-muramoyl-L-alanyl-D-glutamyl-meso-2,6-diaminopimeloyl-D-alanyl-D-alanine + UDP + H(+)</text>
        <dbReference type="Rhea" id="RHEA:31227"/>
        <dbReference type="ChEBI" id="CHEBI:15378"/>
        <dbReference type="ChEBI" id="CHEBI:57705"/>
        <dbReference type="ChEBI" id="CHEBI:58223"/>
        <dbReference type="ChEBI" id="CHEBI:61387"/>
        <dbReference type="ChEBI" id="CHEBI:61388"/>
        <dbReference type="EC" id="2.4.1.227"/>
    </reaction>
</comment>
<comment type="pathway">
    <text evidence="1">Cell wall biogenesis; peptidoglycan biosynthesis.</text>
</comment>
<comment type="subcellular location">
    <subcellularLocation>
        <location evidence="1">Cell inner membrane</location>
        <topology evidence="1">Peripheral membrane protein</topology>
        <orientation evidence="1">Cytoplasmic side</orientation>
    </subcellularLocation>
</comment>
<comment type="similarity">
    <text evidence="1">Belongs to the glycosyltransferase 28 family. MurG subfamily.</text>
</comment>